<comment type="function">
    <text evidence="1">Catalyzes the phosphorolysis of diverse nucleosides, yielding D-ribose 1-phosphate and the respective free bases. Can use uridine, adenosine, guanosine, cytidine, thymidine, inosine and xanthosine as substrates. Also catalyzes the reverse reactions.</text>
</comment>
<comment type="catalytic activity">
    <reaction evidence="1">
        <text>a purine D-ribonucleoside + phosphate = a purine nucleobase + alpha-D-ribose 1-phosphate</text>
        <dbReference type="Rhea" id="RHEA:19805"/>
        <dbReference type="ChEBI" id="CHEBI:26386"/>
        <dbReference type="ChEBI" id="CHEBI:43474"/>
        <dbReference type="ChEBI" id="CHEBI:57720"/>
        <dbReference type="ChEBI" id="CHEBI:142355"/>
        <dbReference type="EC" id="2.4.2.1"/>
    </reaction>
</comment>
<comment type="catalytic activity">
    <reaction evidence="1">
        <text>adenosine + phosphate = alpha-D-ribose 1-phosphate + adenine</text>
        <dbReference type="Rhea" id="RHEA:27642"/>
        <dbReference type="ChEBI" id="CHEBI:16335"/>
        <dbReference type="ChEBI" id="CHEBI:16708"/>
        <dbReference type="ChEBI" id="CHEBI:43474"/>
        <dbReference type="ChEBI" id="CHEBI:57720"/>
        <dbReference type="EC" id="2.4.2.1"/>
    </reaction>
</comment>
<comment type="catalytic activity">
    <reaction evidence="1">
        <text>cytidine + phosphate = cytosine + alpha-D-ribose 1-phosphate</text>
        <dbReference type="Rhea" id="RHEA:52540"/>
        <dbReference type="ChEBI" id="CHEBI:16040"/>
        <dbReference type="ChEBI" id="CHEBI:17562"/>
        <dbReference type="ChEBI" id="CHEBI:43474"/>
        <dbReference type="ChEBI" id="CHEBI:57720"/>
        <dbReference type="EC" id="2.4.2.2"/>
    </reaction>
</comment>
<comment type="catalytic activity">
    <reaction evidence="1">
        <text>guanosine + phosphate = alpha-D-ribose 1-phosphate + guanine</text>
        <dbReference type="Rhea" id="RHEA:13233"/>
        <dbReference type="ChEBI" id="CHEBI:16235"/>
        <dbReference type="ChEBI" id="CHEBI:16750"/>
        <dbReference type="ChEBI" id="CHEBI:43474"/>
        <dbReference type="ChEBI" id="CHEBI:57720"/>
        <dbReference type="EC" id="2.4.2.1"/>
    </reaction>
</comment>
<comment type="catalytic activity">
    <reaction evidence="1">
        <text>inosine + phosphate = alpha-D-ribose 1-phosphate + hypoxanthine</text>
        <dbReference type="Rhea" id="RHEA:27646"/>
        <dbReference type="ChEBI" id="CHEBI:17368"/>
        <dbReference type="ChEBI" id="CHEBI:17596"/>
        <dbReference type="ChEBI" id="CHEBI:43474"/>
        <dbReference type="ChEBI" id="CHEBI:57720"/>
        <dbReference type="EC" id="2.4.2.1"/>
    </reaction>
</comment>
<comment type="catalytic activity">
    <reaction evidence="1">
        <text>thymidine + phosphate = 2-deoxy-alpha-D-ribose 1-phosphate + thymine</text>
        <dbReference type="Rhea" id="RHEA:16037"/>
        <dbReference type="ChEBI" id="CHEBI:17748"/>
        <dbReference type="ChEBI" id="CHEBI:17821"/>
        <dbReference type="ChEBI" id="CHEBI:43474"/>
        <dbReference type="ChEBI" id="CHEBI:57259"/>
        <dbReference type="EC" id="2.4.2.2"/>
    </reaction>
</comment>
<comment type="catalytic activity">
    <reaction evidence="1">
        <text>uridine + phosphate = alpha-D-ribose 1-phosphate + uracil</text>
        <dbReference type="Rhea" id="RHEA:24388"/>
        <dbReference type="ChEBI" id="CHEBI:16704"/>
        <dbReference type="ChEBI" id="CHEBI:17568"/>
        <dbReference type="ChEBI" id="CHEBI:43474"/>
        <dbReference type="ChEBI" id="CHEBI:57720"/>
        <dbReference type="EC" id="2.4.2.2"/>
    </reaction>
</comment>
<comment type="catalytic activity">
    <reaction evidence="1">
        <text>xanthosine + phosphate = alpha-D-ribose 1-phosphate + xanthine</text>
        <dbReference type="Rhea" id="RHEA:27638"/>
        <dbReference type="ChEBI" id="CHEBI:17712"/>
        <dbReference type="ChEBI" id="CHEBI:18107"/>
        <dbReference type="ChEBI" id="CHEBI:43474"/>
        <dbReference type="ChEBI" id="CHEBI:57720"/>
        <dbReference type="EC" id="2.4.2.1"/>
    </reaction>
</comment>
<comment type="similarity">
    <text evidence="1">Belongs to the nucleoside phosphorylase PpnP family.</text>
</comment>
<reference key="1">
    <citation type="journal article" date="2007" name="Genes Dev.">
        <title>New insights into Acinetobacter baumannii pathogenesis revealed by high-density pyrosequencing and transposon mutagenesis.</title>
        <authorList>
            <person name="Smith M.G."/>
            <person name="Gianoulis T.A."/>
            <person name="Pukatzki S."/>
            <person name="Mekalanos J.J."/>
            <person name="Ornston L.N."/>
            <person name="Gerstein M."/>
            <person name="Snyder M."/>
        </authorList>
    </citation>
    <scope>NUCLEOTIDE SEQUENCE [LARGE SCALE GENOMIC DNA]</scope>
    <source>
        <strain>ATCC 17978 / DSM 105126 / CIP 53.77 / LMG 1025 / NCDC KC755 / 5377</strain>
    </source>
</reference>
<name>PPNP_ACIBT</name>
<keyword id="KW-0328">Glycosyltransferase</keyword>
<keyword id="KW-0808">Transferase</keyword>
<gene>
    <name evidence="1" type="primary">ppnP</name>
    <name type="ordered locus">A1S_0323</name>
</gene>
<protein>
    <recommendedName>
        <fullName evidence="1">Pyrimidine/purine nucleoside phosphorylase</fullName>
        <ecNumber evidence="1">2.4.2.1</ecNumber>
        <ecNumber evidence="1">2.4.2.2</ecNumber>
    </recommendedName>
    <alternativeName>
        <fullName evidence="1">Adenosine phosphorylase</fullName>
    </alternativeName>
    <alternativeName>
        <fullName evidence="1">Cytidine phosphorylase</fullName>
    </alternativeName>
    <alternativeName>
        <fullName evidence="1">Guanosine phosphorylase</fullName>
    </alternativeName>
    <alternativeName>
        <fullName evidence="1">Inosine phosphorylase</fullName>
    </alternativeName>
    <alternativeName>
        <fullName evidence="1">Thymidine phosphorylase</fullName>
    </alternativeName>
    <alternativeName>
        <fullName evidence="1">Uridine phosphorylase</fullName>
    </alternativeName>
    <alternativeName>
        <fullName evidence="1">Xanthosine phosphorylase</fullName>
    </alternativeName>
</protein>
<evidence type="ECO:0000255" key="1">
    <source>
        <dbReference type="HAMAP-Rule" id="MF_01537"/>
    </source>
</evidence>
<feature type="chain" id="PRO_0000298686" description="Pyrimidine/purine nucleoside phosphorylase">
    <location>
        <begin position="1"/>
        <end position="108"/>
    </location>
</feature>
<sequence>MSSTQFDHVTVIKKSNVYFGGACISHTVQFEDGTKKTLGVILPTEQPLTFETHVPERMEIISGECRVKIADSNESELFRAGQSFYVPGNSVFKIETDEVLDYVCHLEG</sequence>
<dbReference type="EC" id="2.4.2.1" evidence="1"/>
<dbReference type="EC" id="2.4.2.2" evidence="1"/>
<dbReference type="EMBL" id="CP000521">
    <property type="protein sequence ID" value="ABO10787.2"/>
    <property type="molecule type" value="Genomic_DNA"/>
</dbReference>
<dbReference type="RefSeq" id="WP_000099685.1">
    <property type="nucleotide sequence ID" value="NZ_CP053098.1"/>
</dbReference>
<dbReference type="SMR" id="A3M1J3"/>
<dbReference type="KEGG" id="acb:A1S_0323"/>
<dbReference type="HOGENOM" id="CLU_157874_1_0_6"/>
<dbReference type="GO" id="GO:0005829">
    <property type="term" value="C:cytosol"/>
    <property type="evidence" value="ECO:0007669"/>
    <property type="project" value="TreeGrafter"/>
</dbReference>
<dbReference type="GO" id="GO:0047975">
    <property type="term" value="F:guanosine phosphorylase activity"/>
    <property type="evidence" value="ECO:0007669"/>
    <property type="project" value="UniProtKB-EC"/>
</dbReference>
<dbReference type="GO" id="GO:0004731">
    <property type="term" value="F:purine-nucleoside phosphorylase activity"/>
    <property type="evidence" value="ECO:0007669"/>
    <property type="project" value="UniProtKB-UniRule"/>
</dbReference>
<dbReference type="GO" id="GO:0009032">
    <property type="term" value="F:thymidine phosphorylase activity"/>
    <property type="evidence" value="ECO:0007669"/>
    <property type="project" value="UniProtKB-EC"/>
</dbReference>
<dbReference type="GO" id="GO:0004850">
    <property type="term" value="F:uridine phosphorylase activity"/>
    <property type="evidence" value="ECO:0007669"/>
    <property type="project" value="UniProtKB-EC"/>
</dbReference>
<dbReference type="CDD" id="cd20296">
    <property type="entry name" value="cupin_PpnP-like"/>
    <property type="match status" value="1"/>
</dbReference>
<dbReference type="Gene3D" id="2.60.120.10">
    <property type="entry name" value="Jelly Rolls"/>
    <property type="match status" value="1"/>
</dbReference>
<dbReference type="HAMAP" id="MF_01537">
    <property type="entry name" value="Nucleos_phosphorylase_PpnP"/>
    <property type="match status" value="1"/>
</dbReference>
<dbReference type="InterPro" id="IPR009664">
    <property type="entry name" value="Ppnp"/>
</dbReference>
<dbReference type="InterPro" id="IPR014710">
    <property type="entry name" value="RmlC-like_jellyroll"/>
</dbReference>
<dbReference type="InterPro" id="IPR011051">
    <property type="entry name" value="RmlC_Cupin_sf"/>
</dbReference>
<dbReference type="PANTHER" id="PTHR36540">
    <property type="entry name" value="PYRIMIDINE/PURINE NUCLEOSIDE PHOSPHORYLASE"/>
    <property type="match status" value="1"/>
</dbReference>
<dbReference type="PANTHER" id="PTHR36540:SF1">
    <property type="entry name" value="PYRIMIDINE_PURINE NUCLEOSIDE PHOSPHORYLASE"/>
    <property type="match status" value="1"/>
</dbReference>
<dbReference type="Pfam" id="PF06865">
    <property type="entry name" value="Ppnp"/>
    <property type="match status" value="1"/>
</dbReference>
<dbReference type="SUPFAM" id="SSF51182">
    <property type="entry name" value="RmlC-like cupins"/>
    <property type="match status" value="1"/>
</dbReference>
<organism>
    <name type="scientific">Acinetobacter baumannii (strain ATCC 17978 / DSM 105126 / CIP 53.77 / LMG 1025 / NCDC KC755 / 5377)</name>
    <dbReference type="NCBI Taxonomy" id="400667"/>
    <lineage>
        <taxon>Bacteria</taxon>
        <taxon>Pseudomonadati</taxon>
        <taxon>Pseudomonadota</taxon>
        <taxon>Gammaproteobacteria</taxon>
        <taxon>Moraxellales</taxon>
        <taxon>Moraxellaceae</taxon>
        <taxon>Acinetobacter</taxon>
        <taxon>Acinetobacter calcoaceticus/baumannii complex</taxon>
    </lineage>
</organism>
<accession>A3M1J3</accession>
<proteinExistence type="inferred from homology"/>